<organism>
    <name type="scientific">Rhizobium etli (strain ATCC 51251 / DSM 11541 / JCM 21823 / NBRC 15573 / CFN 42)</name>
    <dbReference type="NCBI Taxonomy" id="347834"/>
    <lineage>
        <taxon>Bacteria</taxon>
        <taxon>Pseudomonadati</taxon>
        <taxon>Pseudomonadota</taxon>
        <taxon>Alphaproteobacteria</taxon>
        <taxon>Hyphomicrobiales</taxon>
        <taxon>Rhizobiaceae</taxon>
        <taxon>Rhizobium/Agrobacterium group</taxon>
        <taxon>Rhizobium</taxon>
    </lineage>
</organism>
<feature type="chain" id="PRO_0000236166" description="L-erythrulose-1-phosphate isomerase">
    <location>
        <begin position="1"/>
        <end position="267"/>
    </location>
</feature>
<feature type="active site" description="Electrophile" evidence="1">
    <location>
        <position position="95"/>
    </location>
</feature>
<feature type="active site" description="Proton acceptor" evidence="1">
    <location>
        <position position="168"/>
    </location>
</feature>
<feature type="binding site" evidence="1">
    <location>
        <position position="174"/>
    </location>
    <ligand>
        <name>substrate</name>
    </ligand>
</feature>
<feature type="binding site" evidence="1">
    <location>
        <position position="211"/>
    </location>
    <ligand>
        <name>substrate</name>
    </ligand>
</feature>
<dbReference type="EC" id="5.3.1.33" evidence="2"/>
<dbReference type="EMBL" id="CP000138">
    <property type="protein sequence ID" value="ABC93934.1"/>
    <property type="molecule type" value="Genomic_DNA"/>
</dbReference>
<dbReference type="RefSeq" id="WP_011428351.1">
    <property type="nucleotide sequence ID" value="NC_007766.1"/>
</dbReference>
<dbReference type="SMR" id="Q2JZQ2"/>
<dbReference type="KEGG" id="ret:RHE_PF00040"/>
<dbReference type="HOGENOM" id="CLU_024251_2_3_5"/>
<dbReference type="OrthoDB" id="9809429at2"/>
<dbReference type="UniPathway" id="UPA01066"/>
<dbReference type="Proteomes" id="UP000001936">
    <property type="component" value="Plasmid p42f"/>
</dbReference>
<dbReference type="GO" id="GO:0005829">
    <property type="term" value="C:cytosol"/>
    <property type="evidence" value="ECO:0007669"/>
    <property type="project" value="TreeGrafter"/>
</dbReference>
<dbReference type="GO" id="GO:0004807">
    <property type="term" value="F:triose-phosphate isomerase activity"/>
    <property type="evidence" value="ECO:0007669"/>
    <property type="project" value="InterPro"/>
</dbReference>
<dbReference type="GO" id="GO:0006094">
    <property type="term" value="P:gluconeogenesis"/>
    <property type="evidence" value="ECO:0007669"/>
    <property type="project" value="UniProtKB-KW"/>
</dbReference>
<dbReference type="GO" id="GO:0046166">
    <property type="term" value="P:glyceraldehyde-3-phosphate biosynthetic process"/>
    <property type="evidence" value="ECO:0007669"/>
    <property type="project" value="TreeGrafter"/>
</dbReference>
<dbReference type="GO" id="GO:0019563">
    <property type="term" value="P:glycerol catabolic process"/>
    <property type="evidence" value="ECO:0007669"/>
    <property type="project" value="TreeGrafter"/>
</dbReference>
<dbReference type="GO" id="GO:0006096">
    <property type="term" value="P:glycolytic process"/>
    <property type="evidence" value="ECO:0007669"/>
    <property type="project" value="UniProtKB-KW"/>
</dbReference>
<dbReference type="GO" id="GO:0006098">
    <property type="term" value="P:pentose-phosphate shunt"/>
    <property type="evidence" value="ECO:0007669"/>
    <property type="project" value="UniProtKB-KW"/>
</dbReference>
<dbReference type="CDD" id="cd00311">
    <property type="entry name" value="TIM"/>
    <property type="match status" value="1"/>
</dbReference>
<dbReference type="Gene3D" id="3.20.20.70">
    <property type="entry name" value="Aldolase class I"/>
    <property type="match status" value="1"/>
</dbReference>
<dbReference type="InterPro" id="IPR013785">
    <property type="entry name" value="Aldolase_TIM"/>
</dbReference>
<dbReference type="InterPro" id="IPR035990">
    <property type="entry name" value="TIM_sf"/>
</dbReference>
<dbReference type="InterPro" id="IPR000652">
    <property type="entry name" value="Triosephosphate_isomerase"/>
</dbReference>
<dbReference type="InterPro" id="IPR020861">
    <property type="entry name" value="Triosephosphate_isomerase_AS"/>
</dbReference>
<dbReference type="NCBIfam" id="NF000722">
    <property type="entry name" value="PRK00042.2-1"/>
    <property type="match status" value="1"/>
</dbReference>
<dbReference type="NCBIfam" id="TIGR00419">
    <property type="entry name" value="tim"/>
    <property type="match status" value="1"/>
</dbReference>
<dbReference type="PANTHER" id="PTHR21139">
    <property type="entry name" value="TRIOSEPHOSPHATE ISOMERASE"/>
    <property type="match status" value="1"/>
</dbReference>
<dbReference type="PANTHER" id="PTHR21139:SF42">
    <property type="entry name" value="TRIOSEPHOSPHATE ISOMERASE"/>
    <property type="match status" value="1"/>
</dbReference>
<dbReference type="Pfam" id="PF00121">
    <property type="entry name" value="TIM"/>
    <property type="match status" value="1"/>
</dbReference>
<dbReference type="SUPFAM" id="SSF51351">
    <property type="entry name" value="Triosephosphate isomerase (TIM)"/>
    <property type="match status" value="1"/>
</dbReference>
<dbReference type="PROSITE" id="PS00171">
    <property type="entry name" value="TIM_1"/>
    <property type="match status" value="1"/>
</dbReference>
<dbReference type="PROSITE" id="PS51440">
    <property type="entry name" value="TIM_2"/>
    <property type="match status" value="1"/>
</dbReference>
<protein>
    <recommendedName>
        <fullName evidence="2">L-erythrulose-1-phosphate isomerase</fullName>
        <ecNumber evidence="2">5.3.1.33</ecNumber>
    </recommendedName>
    <alternativeName>
        <fullName evidence="2">D-3-tetrulose-4-phosphate isomerase</fullName>
    </alternativeName>
</protein>
<geneLocation type="plasmid">
    <name>p42f</name>
</geneLocation>
<accession>Q2JZQ2</accession>
<proteinExistence type="inferred from homology"/>
<keyword id="KW-0963">Cytoplasm</keyword>
<keyword id="KW-0312">Gluconeogenesis</keyword>
<keyword id="KW-0324">Glycolysis</keyword>
<keyword id="KW-0413">Isomerase</keyword>
<keyword id="KW-0570">Pentose shunt</keyword>
<keyword id="KW-0614">Plasmid</keyword>
<keyword id="KW-1185">Reference proteome</keyword>
<reference key="1">
    <citation type="journal article" date="2006" name="Proc. Natl. Acad. Sci. U.S.A.">
        <title>The partitioned Rhizobium etli genome: genetic and metabolic redundancy in seven interacting replicons.</title>
        <authorList>
            <person name="Gonzalez V."/>
            <person name="Santamaria R.I."/>
            <person name="Bustos P."/>
            <person name="Hernandez-Gonzalez I."/>
            <person name="Medrano-Soto A."/>
            <person name="Moreno-Hagelsieb G."/>
            <person name="Janga S.C."/>
            <person name="Ramirez M.A."/>
            <person name="Jimenez-Jacinto V."/>
            <person name="Collado-Vides J."/>
            <person name="Davila G."/>
        </authorList>
    </citation>
    <scope>NUCLEOTIDE SEQUENCE [LARGE SCALE GENOMIC DNA]</scope>
    <source>
        <strain>ATCC 51251 / DSM 11541 / JCM 21823 / NBRC 15573 / CFN 42</strain>
    </source>
</reference>
<evidence type="ECO:0000250" key="1">
    <source>
        <dbReference type="UniProtKB" id="P9WG43"/>
    </source>
</evidence>
<evidence type="ECO:0000250" key="2">
    <source>
        <dbReference type="UniProtKB" id="Q2YIQ6"/>
    </source>
</evidence>
<evidence type="ECO:0000305" key="3"/>
<name>ERYH_RHIEC</name>
<comment type="function">
    <text evidence="2">Catalyzes the isomerization of D-erythrulose-4P to L-erythrulose-1P.</text>
</comment>
<comment type="catalytic activity">
    <reaction evidence="2">
        <text>L-erythrulose 1-phosphate = D-erythrulose 4-phosphate</text>
        <dbReference type="Rhea" id="RHEA:49588"/>
        <dbReference type="ChEBI" id="CHEBI:58002"/>
        <dbReference type="ChEBI" id="CHEBI:90796"/>
        <dbReference type="EC" id="5.3.1.33"/>
    </reaction>
</comment>
<comment type="pathway">
    <text evidence="2">Carbohydrate metabolism; erythritol degradation.</text>
</comment>
<comment type="subunit">
    <text evidence="1">Homodimer.</text>
</comment>
<comment type="subcellular location">
    <subcellularLocation>
        <location evidence="1">Cytoplasm</location>
    </subcellularLocation>
</comment>
<comment type="similarity">
    <text evidence="3">Belongs to the triosephosphate isomerase family.</text>
</comment>
<sequence length="267" mass="29175">MVVWVGTSFKMNKTLEEALAFARRLADADLERDPRVQRFVIPSFTAVREVKRVLTESSVKVGAQNMHWEDAGAWTGEISPLMLKDCRLDLVELGHSERREHFGETDETVGLKAAAAIRHGLTPLICIGETLQERNEGRADAVLRRQVEAALRGVDTEAGEAPILLAYEPVWAIGVNGIPATADYASERHRGIAEVAKSILGRPVPVLYGGSVNPGNCEELIGQPDIDGLFIGRSAWSVEGYLDILARVSAAIDRSSPRQTASERKLP</sequence>
<gene>
    <name evidence="2" type="primary">eryH</name>
    <name type="synonym">tpiAf</name>
    <name type="ordered locus">RHE_PF00040</name>
</gene>